<organism>
    <name type="scientific">Bacteroides helcogenes (strain ATCC 35417 / DSM 20613 / JCM 6297 / CCUG 15421 / P 36-108)</name>
    <dbReference type="NCBI Taxonomy" id="693979"/>
    <lineage>
        <taxon>Bacteria</taxon>
        <taxon>Pseudomonadati</taxon>
        <taxon>Bacteroidota</taxon>
        <taxon>Bacteroidia</taxon>
        <taxon>Bacteroidales</taxon>
        <taxon>Bacteroidaceae</taxon>
        <taxon>Bacteroides</taxon>
    </lineage>
</organism>
<evidence type="ECO:0000250" key="1"/>
<evidence type="ECO:0000255" key="2">
    <source>
        <dbReference type="PROSITE-ProRule" id="PRU01266"/>
    </source>
</evidence>
<evidence type="ECO:0000305" key="3"/>
<sequence>MTVNELKEQVLEGNFISREEAEWLAAQSDKEALYEAAHEITRTLASEEFDMCSIINAKSGRCPENCKWCAQSSHYKTKADVYDLVDKEECLRHAKYNEEQGVARFSLVTSGRKPSGKNMEKLCEAARHMRRHSSIQLCASLGLLNEEEMLALHDAGITRYHCNLETAPSYFSNLCSTHTQAEKIRTLKAARNAGMDICSGGIIGMGESMEQRIEFAFTLKDMEVQSIPINLLSPIPGTPLERQEPLNEEEILTTIALFRFINPRAFLRFAGGRSQLSTEAVRKALHIGINSAIVGDLLTTIGSKVSEDKTLIEEAGYRFSDSQFDREHLWHPYTSTTDPLPVYKVEQAEGATITLESGQTLIEGMSSWWCAIHGYNNPVLNHAATEQIGKMSHVMFGGLTHEPAIELGKLLLPLVPPSMQKIFYADSGSVAVEVALKMAVQYWYGKGKEKKNNFVTIRSGYHGDTWNAMSVCDPVTGMHSLFGSSLPIRYFAPQPRSRYDGDWDAGDSMELQNIIEQHHEELAALILEPIVQGAGGMWFYHPQYLREAARLCKQYGLLLIFDEIATGFGRTGKLFAWEHAGTEPDIMCIGKALTGGYMTLSAVLTTNEVADAISNHSPGVFMHGPTFMGNPLACAVACASVRLLTSPVYDWQGKVNRISMQLREELAPARQLPQVKDVRILGAIGVIEVTENVDMAWMQRRFVEEGIWVRPFGKLVYLMPPFIIEPEQLTKLTSGLIKIIKEML</sequence>
<accession>E6SRG2</accession>
<comment type="function">
    <text evidence="1">Catalyzes two activities which are involved in the biotine biosynthesis: the conversion of dethiobiotin (DTB) to biotin by the insertion of a sulfur atom into dethiobiotin via a radical-based mechanism, and the transfer of the alpha-amino group from S-adenosyl-L-methionine (SAM) to 7-keto-8-aminopelargonic acid (KAPA) to form 7,8-diaminopelargonic acid (DAPA).</text>
</comment>
<comment type="catalytic activity">
    <reaction>
        <text>(4R,5S)-dethiobiotin + (sulfur carrier)-SH + 2 reduced [2Fe-2S]-[ferredoxin] + 2 S-adenosyl-L-methionine = (sulfur carrier)-H + biotin + 2 5'-deoxyadenosine + 2 L-methionine + 2 oxidized [2Fe-2S]-[ferredoxin]</text>
        <dbReference type="Rhea" id="RHEA:22060"/>
        <dbReference type="Rhea" id="RHEA-COMP:10000"/>
        <dbReference type="Rhea" id="RHEA-COMP:10001"/>
        <dbReference type="Rhea" id="RHEA-COMP:14737"/>
        <dbReference type="Rhea" id="RHEA-COMP:14739"/>
        <dbReference type="ChEBI" id="CHEBI:17319"/>
        <dbReference type="ChEBI" id="CHEBI:29917"/>
        <dbReference type="ChEBI" id="CHEBI:33737"/>
        <dbReference type="ChEBI" id="CHEBI:33738"/>
        <dbReference type="ChEBI" id="CHEBI:57586"/>
        <dbReference type="ChEBI" id="CHEBI:57844"/>
        <dbReference type="ChEBI" id="CHEBI:59789"/>
        <dbReference type="ChEBI" id="CHEBI:64428"/>
        <dbReference type="ChEBI" id="CHEBI:149473"/>
        <dbReference type="EC" id="2.8.1.6"/>
    </reaction>
</comment>
<comment type="catalytic activity">
    <reaction>
        <text>(8S)-8-amino-7-oxononanoate + S-adenosyl-L-methionine = S-adenosyl-4-methylsulfanyl-2-oxobutanoate + (7R,8S)-7,8-diammoniononanoate</text>
        <dbReference type="Rhea" id="RHEA:16861"/>
        <dbReference type="ChEBI" id="CHEBI:16490"/>
        <dbReference type="ChEBI" id="CHEBI:59789"/>
        <dbReference type="ChEBI" id="CHEBI:149468"/>
        <dbReference type="ChEBI" id="CHEBI:149469"/>
        <dbReference type="EC" id="2.6.1.62"/>
    </reaction>
</comment>
<comment type="cofactor">
    <cofactor evidence="1">
        <name>[4Fe-4S] cluster</name>
        <dbReference type="ChEBI" id="CHEBI:49883"/>
    </cofactor>
    <text evidence="1">Binds 1 [4Fe-4S] cluster. The cluster is coordinated with 3 cysteines and an exchangeable S-adenosyl-L-methionine.</text>
</comment>
<comment type="cofactor">
    <cofactor evidence="1">
        <name>[2Fe-2S] cluster</name>
        <dbReference type="ChEBI" id="CHEBI:190135"/>
    </cofactor>
    <text evidence="1">Binds 1 [2Fe-2S] cluster. The cluster is coordinated with 3 cysteines and 1 arginine.</text>
</comment>
<comment type="cofactor">
    <cofactor evidence="1">
        <name>pyridoxal 5'-phosphate</name>
        <dbReference type="ChEBI" id="CHEBI:597326"/>
    </cofactor>
</comment>
<comment type="pathway">
    <text>Cofactor biosynthesis; biotin biosynthesis; biotin from 7,8-diaminononanoate: step 2/2.</text>
</comment>
<comment type="pathway">
    <text>Cofactor biosynthesis; biotin biosynthesis; 7,8-diaminononanoate from 8-amino-7-oxononanoate (SAM route): step 1/1.</text>
</comment>
<comment type="subunit">
    <text evidence="1">Homodimer.</text>
</comment>
<comment type="similarity">
    <text evidence="3">In the N-terminal section; belongs to the radical SAM superfamily. Biotin synthase family.</text>
</comment>
<comment type="similarity">
    <text evidence="3">In the C-terminal section; belongs to the class-III pyridoxal-phosphate-dependent aminotransferase family. BioA subfamily.</text>
</comment>
<dbReference type="EC" id="2.8.1.6"/>
<dbReference type="EC" id="2.6.1.62"/>
<dbReference type="EMBL" id="CP002352">
    <property type="protein sequence ID" value="ADV44065.1"/>
    <property type="molecule type" value="Genomic_DNA"/>
</dbReference>
<dbReference type="RefSeq" id="WP_013547658.1">
    <property type="nucleotide sequence ID" value="NC_014933.1"/>
</dbReference>
<dbReference type="SMR" id="E6SRG2"/>
<dbReference type="STRING" id="693979.Bache_2094"/>
<dbReference type="KEGG" id="bhl:Bache_2094"/>
<dbReference type="PATRIC" id="fig|693979.3.peg.2204"/>
<dbReference type="eggNOG" id="COG0161">
    <property type="taxonomic scope" value="Bacteria"/>
</dbReference>
<dbReference type="eggNOG" id="COG0502">
    <property type="taxonomic scope" value="Bacteria"/>
</dbReference>
<dbReference type="HOGENOM" id="CLU_016922_9_1_10"/>
<dbReference type="OrthoDB" id="9807885at2"/>
<dbReference type="UniPathway" id="UPA00078">
    <property type="reaction ID" value="UER00160"/>
</dbReference>
<dbReference type="UniPathway" id="UPA00078">
    <property type="reaction ID" value="UER00162"/>
</dbReference>
<dbReference type="Proteomes" id="UP000008630">
    <property type="component" value="Chromosome"/>
</dbReference>
<dbReference type="GO" id="GO:0005737">
    <property type="term" value="C:cytoplasm"/>
    <property type="evidence" value="ECO:0007669"/>
    <property type="project" value="UniProtKB-UniRule"/>
</dbReference>
<dbReference type="GO" id="GO:0051537">
    <property type="term" value="F:2 iron, 2 sulfur cluster binding"/>
    <property type="evidence" value="ECO:0007669"/>
    <property type="project" value="UniProtKB-KW"/>
</dbReference>
<dbReference type="GO" id="GO:0051539">
    <property type="term" value="F:4 iron, 4 sulfur cluster binding"/>
    <property type="evidence" value="ECO:0007669"/>
    <property type="project" value="UniProtKB-KW"/>
</dbReference>
<dbReference type="GO" id="GO:0004015">
    <property type="term" value="F:adenosylmethionine-8-amino-7-oxononanoate transaminase activity"/>
    <property type="evidence" value="ECO:0007669"/>
    <property type="project" value="UniProtKB-UniRule"/>
</dbReference>
<dbReference type="GO" id="GO:0004076">
    <property type="term" value="F:biotin synthase activity"/>
    <property type="evidence" value="ECO:0007669"/>
    <property type="project" value="UniProtKB-UniRule"/>
</dbReference>
<dbReference type="GO" id="GO:0005506">
    <property type="term" value="F:iron ion binding"/>
    <property type="evidence" value="ECO:0007669"/>
    <property type="project" value="UniProtKB-UniRule"/>
</dbReference>
<dbReference type="GO" id="GO:0030170">
    <property type="term" value="F:pyridoxal phosphate binding"/>
    <property type="evidence" value="ECO:0007669"/>
    <property type="project" value="UniProtKB-UniRule"/>
</dbReference>
<dbReference type="GO" id="GO:0009102">
    <property type="term" value="P:biotin biosynthetic process"/>
    <property type="evidence" value="ECO:0007669"/>
    <property type="project" value="UniProtKB-UniRule"/>
</dbReference>
<dbReference type="CDD" id="cd00610">
    <property type="entry name" value="OAT_like"/>
    <property type="match status" value="1"/>
</dbReference>
<dbReference type="CDD" id="cd01335">
    <property type="entry name" value="Radical_SAM"/>
    <property type="match status" value="1"/>
</dbReference>
<dbReference type="FunFam" id="3.40.640.10:FF:000041">
    <property type="entry name" value="Adenosylmethionine-8-amino-7-oxononanoate aminotransferase"/>
    <property type="match status" value="1"/>
</dbReference>
<dbReference type="FunFam" id="3.20.20.70:FF:000026">
    <property type="entry name" value="Biotin synthase"/>
    <property type="match status" value="1"/>
</dbReference>
<dbReference type="Gene3D" id="3.20.20.70">
    <property type="entry name" value="Aldolase class I"/>
    <property type="match status" value="1"/>
</dbReference>
<dbReference type="Gene3D" id="3.90.1150.10">
    <property type="entry name" value="Aspartate Aminotransferase, domain 1"/>
    <property type="match status" value="1"/>
</dbReference>
<dbReference type="Gene3D" id="3.40.640.10">
    <property type="entry name" value="Type I PLP-dependent aspartate aminotransferase-like (Major domain)"/>
    <property type="match status" value="1"/>
</dbReference>
<dbReference type="HAMAP" id="MF_00834">
    <property type="entry name" value="BioA"/>
    <property type="match status" value="1"/>
</dbReference>
<dbReference type="HAMAP" id="MF_01694">
    <property type="entry name" value="BioB"/>
    <property type="match status" value="1"/>
</dbReference>
<dbReference type="InterPro" id="IPR013785">
    <property type="entry name" value="Aldolase_TIM"/>
</dbReference>
<dbReference type="InterPro" id="IPR005814">
    <property type="entry name" value="Aminotrans_3"/>
</dbReference>
<dbReference type="InterPro" id="IPR049704">
    <property type="entry name" value="Aminotrans_3_PPA_site"/>
</dbReference>
<dbReference type="InterPro" id="IPR010722">
    <property type="entry name" value="BATS_dom"/>
</dbReference>
<dbReference type="InterPro" id="IPR005815">
    <property type="entry name" value="BioA"/>
</dbReference>
<dbReference type="InterPro" id="IPR002684">
    <property type="entry name" value="Biotin_synth/BioAB"/>
</dbReference>
<dbReference type="InterPro" id="IPR006638">
    <property type="entry name" value="Elp3/MiaA/NifB-like_rSAM"/>
</dbReference>
<dbReference type="InterPro" id="IPR015424">
    <property type="entry name" value="PyrdxlP-dep_Trfase"/>
</dbReference>
<dbReference type="InterPro" id="IPR015421">
    <property type="entry name" value="PyrdxlP-dep_Trfase_major"/>
</dbReference>
<dbReference type="InterPro" id="IPR015422">
    <property type="entry name" value="PyrdxlP-dep_Trfase_small"/>
</dbReference>
<dbReference type="InterPro" id="IPR007197">
    <property type="entry name" value="rSAM"/>
</dbReference>
<dbReference type="NCBIfam" id="TIGR00508">
    <property type="entry name" value="bioA"/>
    <property type="match status" value="1"/>
</dbReference>
<dbReference type="NCBIfam" id="TIGR00433">
    <property type="entry name" value="bioB"/>
    <property type="match status" value="1"/>
</dbReference>
<dbReference type="NCBIfam" id="NF004624">
    <property type="entry name" value="PRK05964.1"/>
    <property type="match status" value="1"/>
</dbReference>
<dbReference type="NCBIfam" id="NF005940">
    <property type="entry name" value="PRK07986.1"/>
    <property type="match status" value="1"/>
</dbReference>
<dbReference type="PANTHER" id="PTHR42684">
    <property type="entry name" value="ADENOSYLMETHIONINE-8-AMINO-7-OXONONANOATE AMINOTRANSFERASE"/>
    <property type="match status" value="1"/>
</dbReference>
<dbReference type="PANTHER" id="PTHR42684:SF17">
    <property type="entry name" value="ADENOSYLMETHIONINE-8-AMINO-7-OXONONANOATE AMINOTRANSFERASE"/>
    <property type="match status" value="1"/>
</dbReference>
<dbReference type="Pfam" id="PF00202">
    <property type="entry name" value="Aminotran_3"/>
    <property type="match status" value="1"/>
</dbReference>
<dbReference type="Pfam" id="PF06968">
    <property type="entry name" value="BATS"/>
    <property type="match status" value="1"/>
</dbReference>
<dbReference type="Pfam" id="PF04055">
    <property type="entry name" value="Radical_SAM"/>
    <property type="match status" value="1"/>
</dbReference>
<dbReference type="SFLD" id="SFLDG01060">
    <property type="entry name" value="BATS_domain_containing"/>
    <property type="match status" value="1"/>
</dbReference>
<dbReference type="SFLD" id="SFLDG01278">
    <property type="entry name" value="biotin_synthase_like"/>
    <property type="match status" value="1"/>
</dbReference>
<dbReference type="SMART" id="SM00876">
    <property type="entry name" value="BATS"/>
    <property type="match status" value="1"/>
</dbReference>
<dbReference type="SMART" id="SM00729">
    <property type="entry name" value="Elp3"/>
    <property type="match status" value="1"/>
</dbReference>
<dbReference type="SUPFAM" id="SSF53383">
    <property type="entry name" value="PLP-dependent transferases"/>
    <property type="match status" value="1"/>
</dbReference>
<dbReference type="SUPFAM" id="SSF102114">
    <property type="entry name" value="Radical SAM enzymes"/>
    <property type="match status" value="1"/>
</dbReference>
<dbReference type="PROSITE" id="PS00600">
    <property type="entry name" value="AA_TRANSFER_CLASS_3"/>
    <property type="match status" value="1"/>
</dbReference>
<dbReference type="PROSITE" id="PS51918">
    <property type="entry name" value="RADICAL_SAM"/>
    <property type="match status" value="1"/>
</dbReference>
<gene>
    <name type="primary">bioB</name>
    <name type="ordered locus">Bache_2094</name>
</gene>
<proteinExistence type="inferred from homology"/>
<name>BIOAB_BACT6</name>
<feature type="chain" id="PRO_0000411134" description="Biotin biosynthesis bifunctional protein BioAB">
    <location>
        <begin position="1"/>
        <end position="744"/>
    </location>
</feature>
<feature type="domain" description="Radical SAM core" evidence="2">
    <location>
        <begin position="44"/>
        <end position="270"/>
    </location>
</feature>
<feature type="binding site" evidence="1">
    <location>
        <position position="62"/>
    </location>
    <ligand>
        <name>[4Fe-4S] cluster</name>
        <dbReference type="ChEBI" id="CHEBI:49883"/>
        <note>4Fe-4S-S-AdoMet</note>
    </ligand>
</feature>
<feature type="binding site" evidence="1">
    <location>
        <position position="66"/>
    </location>
    <ligand>
        <name>[4Fe-4S] cluster</name>
        <dbReference type="ChEBI" id="CHEBI:49883"/>
        <note>4Fe-4S-S-AdoMet</note>
    </ligand>
</feature>
<feature type="binding site" evidence="1">
    <location>
        <position position="69"/>
    </location>
    <ligand>
        <name>[4Fe-4S] cluster</name>
        <dbReference type="ChEBI" id="CHEBI:49883"/>
        <note>4Fe-4S-S-AdoMet</note>
    </ligand>
</feature>
<feature type="binding site" evidence="1">
    <location>
        <position position="106"/>
    </location>
    <ligand>
        <name>[2Fe-2S] cluster</name>
        <dbReference type="ChEBI" id="CHEBI:190135"/>
    </ligand>
</feature>
<feature type="binding site" evidence="1">
    <location>
        <position position="138"/>
    </location>
    <ligand>
        <name>[2Fe-2S] cluster</name>
        <dbReference type="ChEBI" id="CHEBI:190135"/>
    </ligand>
</feature>
<feature type="binding site" evidence="1">
    <location>
        <position position="198"/>
    </location>
    <ligand>
        <name>[2Fe-2S] cluster</name>
        <dbReference type="ChEBI" id="CHEBI:190135"/>
    </ligand>
</feature>
<feature type="binding site" evidence="1">
    <location>
        <position position="268"/>
    </location>
    <ligand>
        <name>[2Fe-2S] cluster</name>
        <dbReference type="ChEBI" id="CHEBI:190135"/>
    </ligand>
</feature>
<feature type="binding site" evidence="1">
    <location>
        <position position="368"/>
    </location>
    <ligand>
        <name>(8S)-8-amino-7-oxononanoate</name>
        <dbReference type="ChEBI" id="CHEBI:149468"/>
    </ligand>
</feature>
<feature type="binding site" evidence="1">
    <location>
        <begin position="428"/>
        <end position="429"/>
    </location>
    <ligand>
        <name>pyridoxal 5'-phosphate</name>
        <dbReference type="ChEBI" id="CHEBI:597326"/>
    </ligand>
</feature>
<feature type="binding site" evidence="1">
    <location>
        <position position="461"/>
    </location>
    <ligand>
        <name>(8S)-8-amino-7-oxononanoate</name>
        <dbReference type="ChEBI" id="CHEBI:149468"/>
    </ligand>
</feature>
<feature type="binding site" evidence="1">
    <location>
        <position position="562"/>
    </location>
    <ligand>
        <name>pyridoxal 5'-phosphate</name>
        <dbReference type="ChEBI" id="CHEBI:597326"/>
    </ligand>
</feature>
<feature type="binding site" evidence="1">
    <location>
        <position position="591"/>
    </location>
    <ligand>
        <name>(8S)-8-amino-7-oxononanoate</name>
        <dbReference type="ChEBI" id="CHEBI:149468"/>
    </ligand>
</feature>
<feature type="binding site" evidence="1">
    <location>
        <position position="624"/>
    </location>
    <ligand>
        <name>(8S)-8-amino-7-oxononanoate</name>
        <dbReference type="ChEBI" id="CHEBI:149468"/>
    </ligand>
</feature>
<feature type="binding site" evidence="1">
    <location>
        <begin position="625"/>
        <end position="626"/>
    </location>
    <ligand>
        <name>pyridoxal 5'-phosphate</name>
        <dbReference type="ChEBI" id="CHEBI:597326"/>
    </ligand>
</feature>
<feature type="binding site" evidence="1">
    <location>
        <position position="710"/>
    </location>
    <ligand>
        <name>(8S)-8-amino-7-oxononanoate</name>
        <dbReference type="ChEBI" id="CHEBI:149468"/>
    </ligand>
</feature>
<feature type="site" description="Participates in the substrate recognition with KAPA and in a stacking interaction with the adenine ring of SAM" evidence="1">
    <location>
        <position position="333"/>
    </location>
</feature>
<feature type="modified residue" description="N6-(pyridoxal phosphate)lysine" evidence="1">
    <location>
        <position position="591"/>
    </location>
</feature>
<keyword id="KW-0001">2Fe-2S</keyword>
<keyword id="KW-0004">4Fe-4S</keyword>
<keyword id="KW-0032">Aminotransferase</keyword>
<keyword id="KW-0093">Biotin biosynthesis</keyword>
<keyword id="KW-0408">Iron</keyword>
<keyword id="KW-0411">Iron-sulfur</keyword>
<keyword id="KW-0479">Metal-binding</keyword>
<keyword id="KW-0511">Multifunctional enzyme</keyword>
<keyword id="KW-0663">Pyridoxal phosphate</keyword>
<keyword id="KW-1185">Reference proteome</keyword>
<keyword id="KW-0949">S-adenosyl-L-methionine</keyword>
<keyword id="KW-0808">Transferase</keyword>
<reference key="1">
    <citation type="journal article" date="2011" name="Stand. Genomic Sci.">
        <title>Complete genome sequence of Bacteroides helcogenes type strain (P 36-108).</title>
        <authorList>
            <person name="Pati A."/>
            <person name="Gronow S."/>
            <person name="Zeytun A."/>
            <person name="Lapidus A."/>
            <person name="Nolan M."/>
            <person name="Hammon N."/>
            <person name="Deshpande S."/>
            <person name="Cheng J.F."/>
            <person name="Tapia R."/>
            <person name="Han C."/>
            <person name="Goodwin L."/>
            <person name="Pitluck S."/>
            <person name="Liolios K."/>
            <person name="Pagani I."/>
            <person name="Ivanova N."/>
            <person name="Mavromatis K."/>
            <person name="Chen A."/>
            <person name="Palaniappan K."/>
            <person name="Land M."/>
            <person name="Hauser L."/>
            <person name="Chang Y.J."/>
            <person name="Jeffries C.D."/>
            <person name="Detter J.C."/>
            <person name="Brambilla E."/>
            <person name="Rohde M."/>
            <person name="Goker M."/>
            <person name="Woyke T."/>
            <person name="Bristow J."/>
            <person name="Eisen J.A."/>
            <person name="Markowitz V."/>
            <person name="Hugenholtz P."/>
            <person name="Kyrpides N.C."/>
            <person name="Klenk H.P."/>
            <person name="Lucas S."/>
        </authorList>
    </citation>
    <scope>NUCLEOTIDE SEQUENCE [LARGE SCALE GENOMIC DNA]</scope>
    <source>
        <strain>ATCC 35417 / DSM 20613 / JCM 6297 / CCUG 15421 / P 36-108</strain>
    </source>
</reference>
<protein>
    <recommendedName>
        <fullName>Biotin biosynthesis bifunctional protein BioAB</fullName>
    </recommendedName>
    <domain>
        <recommendedName>
            <fullName>Biotin synthase BioB</fullName>
            <ecNumber>2.8.1.6</ecNumber>
        </recommendedName>
    </domain>
    <domain>
        <recommendedName>
            <fullName>Adenosylmethionine-8-amino-7-oxononanoate aminotransferase BioA</fullName>
            <ecNumber>2.6.1.62</ecNumber>
        </recommendedName>
        <alternativeName>
            <fullName>7,8-diamino-pelargonic acid aminotransferase</fullName>
            <shortName>DAPA AT</shortName>
            <shortName>DAPA aminotransferase</shortName>
        </alternativeName>
        <alternativeName>
            <fullName>7,8-diaminononanoate synthase</fullName>
            <shortName>DANS</shortName>
        </alternativeName>
        <alternativeName>
            <fullName>Diaminopelargonic acid synthase</fullName>
        </alternativeName>
    </domain>
</protein>